<accession>P69212</accession>
<accession>P77412</accession>
<gene>
    <name type="primary">mdtJ</name>
    <name type="synonym">ydgF</name>
    <name type="ordered locus">b1600</name>
    <name type="ordered locus">JW1592</name>
</gene>
<organism>
    <name type="scientific">Escherichia coli (strain K12)</name>
    <dbReference type="NCBI Taxonomy" id="83333"/>
    <lineage>
        <taxon>Bacteria</taxon>
        <taxon>Pseudomonadati</taxon>
        <taxon>Pseudomonadota</taxon>
        <taxon>Gammaproteobacteria</taxon>
        <taxon>Enterobacterales</taxon>
        <taxon>Enterobacteriaceae</taxon>
        <taxon>Escherichia</taxon>
    </lineage>
</organism>
<comment type="function">
    <text evidence="3 4">Catalyzes the excretion of spermidine. Can also confer resistance to deoxycholate and SDS.</text>
</comment>
<comment type="subunit">
    <text evidence="6">Forms a complex with MdtI.</text>
</comment>
<comment type="subcellular location">
    <subcellularLocation>
        <location>Cell inner membrane</location>
        <topology>Multi-pass membrane protein</topology>
    </subcellularLocation>
</comment>
<comment type="induction">
    <text evidence="4">Induced by spermidine.</text>
</comment>
<comment type="similarity">
    <text evidence="2 5">Belongs to the drug/metabolite transporter (DMT) superfamily. Small multidrug resistance (SMR) (TC 2.A.7.1) family. MdtJ subfamily.</text>
</comment>
<keyword id="KW-0997">Cell inner membrane</keyword>
<keyword id="KW-1003">Cell membrane</keyword>
<keyword id="KW-0472">Membrane</keyword>
<keyword id="KW-1185">Reference proteome</keyword>
<keyword id="KW-0812">Transmembrane</keyword>
<keyword id="KW-1133">Transmembrane helix</keyword>
<keyword id="KW-0813">Transport</keyword>
<name>MDTJ_ECOLI</name>
<reference key="1">
    <citation type="journal article" date="1996" name="DNA Res.">
        <title>A 570-kb DNA sequence of the Escherichia coli K-12 genome corresponding to the 28.0-40.1 min region on the linkage map.</title>
        <authorList>
            <person name="Aiba H."/>
            <person name="Baba T."/>
            <person name="Fujita K."/>
            <person name="Hayashi K."/>
            <person name="Inada T."/>
            <person name="Isono K."/>
            <person name="Itoh T."/>
            <person name="Kasai H."/>
            <person name="Kashimoto K."/>
            <person name="Kimura S."/>
            <person name="Kitakawa M."/>
            <person name="Kitagawa M."/>
            <person name="Makino K."/>
            <person name="Miki T."/>
            <person name="Mizobuchi K."/>
            <person name="Mori H."/>
            <person name="Mori T."/>
            <person name="Motomura K."/>
            <person name="Nakade S."/>
            <person name="Nakamura Y."/>
            <person name="Nashimoto H."/>
            <person name="Nishio Y."/>
            <person name="Oshima T."/>
            <person name="Saito N."/>
            <person name="Sampei G."/>
            <person name="Seki Y."/>
            <person name="Sivasundaram S."/>
            <person name="Tagami H."/>
            <person name="Takeda J."/>
            <person name="Takemoto K."/>
            <person name="Takeuchi Y."/>
            <person name="Wada C."/>
            <person name="Yamamoto Y."/>
            <person name="Horiuchi T."/>
        </authorList>
    </citation>
    <scope>NUCLEOTIDE SEQUENCE [LARGE SCALE GENOMIC DNA]</scope>
    <source>
        <strain>K12 / W3110 / ATCC 27325 / DSM 5911</strain>
    </source>
</reference>
<reference key="2">
    <citation type="journal article" date="1997" name="Science">
        <title>The complete genome sequence of Escherichia coli K-12.</title>
        <authorList>
            <person name="Blattner F.R."/>
            <person name="Plunkett G. III"/>
            <person name="Bloch C.A."/>
            <person name="Perna N.T."/>
            <person name="Burland V."/>
            <person name="Riley M."/>
            <person name="Collado-Vides J."/>
            <person name="Glasner J.D."/>
            <person name="Rode C.K."/>
            <person name="Mayhew G.F."/>
            <person name="Gregor J."/>
            <person name="Davis N.W."/>
            <person name="Kirkpatrick H.A."/>
            <person name="Goeden M.A."/>
            <person name="Rose D.J."/>
            <person name="Mau B."/>
            <person name="Shao Y."/>
        </authorList>
    </citation>
    <scope>NUCLEOTIDE SEQUENCE [LARGE SCALE GENOMIC DNA]</scope>
    <source>
        <strain>K12 / MG1655 / ATCC 47076</strain>
    </source>
</reference>
<reference key="3">
    <citation type="journal article" date="2006" name="Mol. Syst. Biol.">
        <title>Highly accurate genome sequences of Escherichia coli K-12 strains MG1655 and W3110.</title>
        <authorList>
            <person name="Hayashi K."/>
            <person name="Morooka N."/>
            <person name="Yamamoto Y."/>
            <person name="Fujita K."/>
            <person name="Isono K."/>
            <person name="Choi S."/>
            <person name="Ohtsubo E."/>
            <person name="Baba T."/>
            <person name="Wanner B.L."/>
            <person name="Mori H."/>
            <person name="Horiuchi T."/>
        </authorList>
    </citation>
    <scope>NUCLEOTIDE SEQUENCE [LARGE SCALE GENOMIC DNA]</scope>
    <source>
        <strain>K12 / W3110 / ATCC 27325 / DSM 5911</strain>
    </source>
</reference>
<reference key="4">
    <citation type="journal article" date="2001" name="J. Bacteriol.">
        <title>Analysis of a complete library of putative drug transporter genes in Escherichia coli.</title>
        <authorList>
            <person name="Nishino K."/>
            <person name="Yamaguchi A."/>
        </authorList>
    </citation>
    <scope>FUNCTION</scope>
</reference>
<reference key="5">
    <citation type="journal article" date="2005" name="Science">
        <title>Global topology analysis of the Escherichia coli inner membrane proteome.</title>
        <authorList>
            <person name="Daley D.O."/>
            <person name="Rapp M."/>
            <person name="Granseth E."/>
            <person name="Melen K."/>
            <person name="Drew D."/>
            <person name="von Heijne G."/>
        </authorList>
    </citation>
    <scope>TOPOLOGY [LARGE SCALE ANALYSIS]</scope>
    <source>
        <strain>K12 / MG1655 / ATCC 47076</strain>
    </source>
</reference>
<reference key="6">
    <citation type="journal article" date="2008" name="J. Bacteriol.">
        <title>Identification of a spermidine excretion protein complex (MdtJI) in Escherichia coli.</title>
        <authorList>
            <person name="Higashi K."/>
            <person name="Ishigure H."/>
            <person name="Demizu R."/>
            <person name="Uemura T."/>
            <person name="Nishino K."/>
            <person name="Yamaguchi A."/>
            <person name="Kashiwagi K."/>
            <person name="Igarashi K."/>
        </authorList>
    </citation>
    <scope>FUNCTION</scope>
    <scope>SUBUNIT</scope>
    <scope>INDUCTION</scope>
    <scope>MUTAGENESIS OF TYR-4; TRP-5; GLU-15; TYR-45; TYR-61 AND GLU-82</scope>
    <source>
        <strain>K12 / C600 / CR34 / ATCC 23724 / DSM 3925 / LMG 3041 / NCIB 10222</strain>
    </source>
</reference>
<feature type="chain" id="PRO_0000108079" description="Spermidine export protein MdtJ">
    <location>
        <begin position="1"/>
        <end position="121"/>
    </location>
</feature>
<feature type="topological domain" description="Cytoplasmic" evidence="1">
    <location>
        <position position="1"/>
    </location>
</feature>
<feature type="transmembrane region" description="Helical" evidence="1">
    <location>
        <begin position="2"/>
        <end position="22"/>
    </location>
</feature>
<feature type="topological domain" description="Periplasmic" evidence="1">
    <location>
        <begin position="23"/>
        <end position="31"/>
    </location>
</feature>
<feature type="transmembrane region" description="Helical" evidence="1">
    <location>
        <begin position="32"/>
        <end position="52"/>
    </location>
</feature>
<feature type="topological domain" description="Cytoplasmic" evidence="1">
    <location>
        <begin position="53"/>
        <end position="54"/>
    </location>
</feature>
<feature type="transmembrane region" description="Helical" evidence="1">
    <location>
        <begin position="55"/>
        <end position="75"/>
    </location>
</feature>
<feature type="topological domain" description="Periplasmic" evidence="1">
    <location>
        <begin position="76"/>
        <end position="81"/>
    </location>
</feature>
<feature type="transmembrane region" description="Helical" evidence="1">
    <location>
        <begin position="82"/>
        <end position="102"/>
    </location>
</feature>
<feature type="topological domain" description="Cytoplasmic" evidence="1">
    <location>
        <begin position="103"/>
        <end position="121"/>
    </location>
</feature>
<feature type="mutagenesis site" description="Decrease in spermidine excretion." evidence="4">
    <original>Y</original>
    <variation>L</variation>
    <location>
        <position position="4"/>
    </location>
</feature>
<feature type="mutagenesis site" description="Decrease in spermidine excretion." evidence="4">
    <original>W</original>
    <variation>L</variation>
    <location>
        <position position="5"/>
    </location>
</feature>
<feature type="mutagenesis site" description="Decrease in spermidine excretion." evidence="4">
    <original>E</original>
    <variation>Q</variation>
    <location>
        <position position="15"/>
    </location>
</feature>
<feature type="mutagenesis site" description="Decrease in spermidine excretion." evidence="4">
    <original>Y</original>
    <variation>L</variation>
    <location>
        <position position="45"/>
    </location>
</feature>
<feature type="mutagenesis site" description="Decrease in spermidine excretion." evidence="4">
    <original>Y</original>
    <variation>L</variation>
    <location>
        <position position="61"/>
    </location>
</feature>
<feature type="mutagenesis site" description="Decrease in spermidine excretion." evidence="4">
    <original>E</original>
    <variation>Q</variation>
    <location>
        <position position="82"/>
    </location>
</feature>
<evidence type="ECO:0000255" key="1"/>
<evidence type="ECO:0000255" key="2">
    <source>
        <dbReference type="HAMAP-Rule" id="MF_01598"/>
    </source>
</evidence>
<evidence type="ECO:0000269" key="3">
    <source>
    </source>
</evidence>
<evidence type="ECO:0000269" key="4">
    <source>
    </source>
</evidence>
<evidence type="ECO:0000305" key="5"/>
<evidence type="ECO:0000305" key="6">
    <source>
    </source>
</evidence>
<proteinExistence type="evidence at protein level"/>
<protein>
    <recommendedName>
        <fullName>Spermidine export protein MdtJ</fullName>
    </recommendedName>
</protein>
<sequence>MYIYWILLGLAIATEITGTLSMKWASVSEGNGGFILMLVMISLSYIFLSFAVKKIALGVAYALWEGIGILFITLFSVLLFDESLSLMKIAGLTTLVAGIVLIKSGTRKARKPELEVNHGAV</sequence>
<dbReference type="EMBL" id="U00096">
    <property type="protein sequence ID" value="AAC74672.1"/>
    <property type="molecule type" value="Genomic_DNA"/>
</dbReference>
<dbReference type="EMBL" id="AP009048">
    <property type="protein sequence ID" value="BAA15334.1"/>
    <property type="molecule type" value="Genomic_DNA"/>
</dbReference>
<dbReference type="PIR" id="B64916">
    <property type="entry name" value="B64916"/>
</dbReference>
<dbReference type="RefSeq" id="NP_416117.1">
    <property type="nucleotide sequence ID" value="NC_000913.3"/>
</dbReference>
<dbReference type="RefSeq" id="WP_000276149.1">
    <property type="nucleotide sequence ID" value="NZ_SSZK01000001.1"/>
</dbReference>
<dbReference type="SMR" id="P69212"/>
<dbReference type="BioGRID" id="4260838">
    <property type="interactions" value="195"/>
</dbReference>
<dbReference type="ComplexPortal" id="CPX-6020">
    <property type="entry name" value="MdtIJ spermidine export complex"/>
</dbReference>
<dbReference type="FunCoup" id="P69212">
    <property type="interactions" value="126"/>
</dbReference>
<dbReference type="STRING" id="511145.b1600"/>
<dbReference type="PaxDb" id="511145-b1600"/>
<dbReference type="DNASU" id="946139"/>
<dbReference type="EnsemblBacteria" id="AAC74672">
    <property type="protein sequence ID" value="AAC74672"/>
    <property type="gene ID" value="b1600"/>
</dbReference>
<dbReference type="GeneID" id="93775748"/>
<dbReference type="GeneID" id="946139"/>
<dbReference type="KEGG" id="ecj:JW1592"/>
<dbReference type="KEGG" id="eco:b1600"/>
<dbReference type="KEGG" id="ecoc:C3026_09215"/>
<dbReference type="PATRIC" id="fig|1411691.4.peg.662"/>
<dbReference type="EchoBASE" id="EB3686"/>
<dbReference type="eggNOG" id="COG2076">
    <property type="taxonomic scope" value="Bacteria"/>
</dbReference>
<dbReference type="HOGENOM" id="CLU_133067_0_0_6"/>
<dbReference type="InParanoid" id="P69212"/>
<dbReference type="OMA" id="MRSWIYL"/>
<dbReference type="OrthoDB" id="9808638at2"/>
<dbReference type="PhylomeDB" id="P69212"/>
<dbReference type="BioCyc" id="EcoCyc:B1600-MONOMER"/>
<dbReference type="BioCyc" id="MetaCyc:B1600-MONOMER"/>
<dbReference type="PRO" id="PR:P69212"/>
<dbReference type="Proteomes" id="UP000000625">
    <property type="component" value="Chromosome"/>
</dbReference>
<dbReference type="GO" id="GO:0005886">
    <property type="term" value="C:plasma membrane"/>
    <property type="evidence" value="ECO:0000314"/>
    <property type="project" value="EcoCyc"/>
</dbReference>
<dbReference type="GO" id="GO:1902495">
    <property type="term" value="C:transmembrane transporter complex"/>
    <property type="evidence" value="ECO:0000353"/>
    <property type="project" value="ComplexPortal"/>
</dbReference>
<dbReference type="GO" id="GO:0015199">
    <property type="term" value="F:amino-acid betaine transmembrane transporter activity"/>
    <property type="evidence" value="ECO:0000318"/>
    <property type="project" value="GO_Central"/>
</dbReference>
<dbReference type="GO" id="GO:0015297">
    <property type="term" value="F:antiporter activity"/>
    <property type="evidence" value="ECO:0000318"/>
    <property type="project" value="GO_Central"/>
</dbReference>
<dbReference type="GO" id="GO:0015220">
    <property type="term" value="F:choline transmembrane transporter activity"/>
    <property type="evidence" value="ECO:0000318"/>
    <property type="project" value="GO_Central"/>
</dbReference>
<dbReference type="GO" id="GO:0015606">
    <property type="term" value="F:spermidine transmembrane transporter activity"/>
    <property type="evidence" value="ECO:0000314"/>
    <property type="project" value="EcoCyc"/>
</dbReference>
<dbReference type="GO" id="GO:0015871">
    <property type="term" value="P:choline transport"/>
    <property type="evidence" value="ECO:0000318"/>
    <property type="project" value="GO_Central"/>
</dbReference>
<dbReference type="GO" id="GO:0031460">
    <property type="term" value="P:glycine betaine transport"/>
    <property type="evidence" value="ECO:0000318"/>
    <property type="project" value="GO_Central"/>
</dbReference>
<dbReference type="GO" id="GO:1903711">
    <property type="term" value="P:spermidine transmembrane transport"/>
    <property type="evidence" value="ECO:0000314"/>
    <property type="project" value="ComplexPortal"/>
</dbReference>
<dbReference type="GO" id="GO:1990961">
    <property type="term" value="P:xenobiotic detoxification by transmembrane export across the plasma membrane"/>
    <property type="evidence" value="ECO:0000315"/>
    <property type="project" value="EcoCyc"/>
</dbReference>
<dbReference type="FunFam" id="1.10.3730.20:FF:000001">
    <property type="entry name" value="Quaternary ammonium compound resistance transporter SugE"/>
    <property type="match status" value="1"/>
</dbReference>
<dbReference type="Gene3D" id="1.10.3730.20">
    <property type="match status" value="1"/>
</dbReference>
<dbReference type="HAMAP" id="MF_01598">
    <property type="entry name" value="MdtJ"/>
    <property type="match status" value="1"/>
</dbReference>
<dbReference type="InterPro" id="IPR000390">
    <property type="entry name" value="Small_drug/metabolite_transptr"/>
</dbReference>
<dbReference type="InterPro" id="IPR045324">
    <property type="entry name" value="Small_multidrug_res"/>
</dbReference>
<dbReference type="InterPro" id="IPR023740">
    <property type="entry name" value="Spermidine_export_MdtJ"/>
</dbReference>
<dbReference type="NCBIfam" id="NF007767">
    <property type="entry name" value="PRK10452.1"/>
    <property type="match status" value="1"/>
</dbReference>
<dbReference type="PANTHER" id="PTHR30561">
    <property type="entry name" value="SMR FAMILY PROTON-DEPENDENT DRUG EFFLUX TRANSPORTER SUGE"/>
    <property type="match status" value="1"/>
</dbReference>
<dbReference type="PANTHER" id="PTHR30561:SF2">
    <property type="entry name" value="SPERMIDINE EXPORT PROTEIN MDTJ"/>
    <property type="match status" value="1"/>
</dbReference>
<dbReference type="Pfam" id="PF00893">
    <property type="entry name" value="Multi_Drug_Res"/>
    <property type="match status" value="1"/>
</dbReference>
<dbReference type="SUPFAM" id="SSF103481">
    <property type="entry name" value="Multidrug resistance efflux transporter EmrE"/>
    <property type="match status" value="1"/>
</dbReference>